<evidence type="ECO:0000250" key="1"/>
<evidence type="ECO:0000255" key="2">
    <source>
        <dbReference type="PROSITE-ProRule" id="PRU10013"/>
    </source>
</evidence>
<evidence type="ECO:0000305" key="3"/>
<organism>
    <name type="scientific">Zea mays</name>
    <name type="common">Maize</name>
    <dbReference type="NCBI Taxonomy" id="4577"/>
    <lineage>
        <taxon>Eukaryota</taxon>
        <taxon>Viridiplantae</taxon>
        <taxon>Streptophyta</taxon>
        <taxon>Embryophyta</taxon>
        <taxon>Tracheophyta</taxon>
        <taxon>Spermatophyta</taxon>
        <taxon>Magnoliopsida</taxon>
        <taxon>Liliopsida</taxon>
        <taxon>Poales</taxon>
        <taxon>Poaceae</taxon>
        <taxon>PACMAD clade</taxon>
        <taxon>Panicoideae</taxon>
        <taxon>Andropogonodae</taxon>
        <taxon>Andropogoneae</taxon>
        <taxon>Tripsacinae</taxon>
        <taxon>Zea</taxon>
    </lineage>
</organism>
<feature type="chain" id="PRO_0000084946" description="Catalase isozyme 1">
    <location>
        <begin position="1"/>
        <end position="492"/>
    </location>
</feature>
<feature type="active site" evidence="2">
    <location>
        <position position="65"/>
    </location>
</feature>
<feature type="active site" evidence="2">
    <location>
        <position position="138"/>
    </location>
</feature>
<feature type="binding site" description="axial binding residue" evidence="1">
    <location>
        <position position="348"/>
    </location>
    <ligand>
        <name>heme</name>
        <dbReference type="ChEBI" id="CHEBI:30413"/>
    </ligand>
    <ligandPart>
        <name>Fe</name>
        <dbReference type="ChEBI" id="CHEBI:18248"/>
    </ligandPart>
</feature>
<feature type="sequence variant" description="In strain: cv. W64A.">
    <original>A</original>
    <variation>V</variation>
    <location>
        <position position="157"/>
    </location>
</feature>
<feature type="sequence variant" description="In strain: cv. W64A.">
    <original>S</original>
    <variation>T</variation>
    <location>
        <position position="211"/>
    </location>
</feature>
<feature type="sequence variant" description="In strain: cv. W64A.">
    <original>S</original>
    <variation>I</variation>
    <location>
        <position position="329"/>
    </location>
</feature>
<feature type="sequence variant" description="In strain: cv. W64A.">
    <original>P</original>
    <variation>A</variation>
    <location>
        <position position="483"/>
    </location>
</feature>
<feature type="sequence conflict" description="In Ref. 1; CAA31056/CAA42720." evidence="3" ref="1">
    <original>A</original>
    <variation>G</variation>
    <location>
        <position position="332"/>
    </location>
</feature>
<feature type="sequence conflict" description="In Ref. 1; CAA31056/CAA42720." evidence="3" ref="1">
    <original>R</original>
    <variation>G</variation>
    <location>
        <position position="415"/>
    </location>
</feature>
<feature type="sequence conflict" description="In Ref. 1; CAA31056/CAA42720." evidence="3" ref="1">
    <original>H</original>
    <variation>D</variation>
    <location>
        <position position="456"/>
    </location>
</feature>
<sequence length="492" mass="56877">MDPYKHRPSSGSNSSFWTTNSGAPVWNNNSALTVGQRGPILLEDYHLIEKLAQFDRERIPERVVHARGASAKGFFEVTHDVSHLTCADFLRAPGVQTPVIVRFSTVVHERGSPETLRDPRGFAVKFYTREGNFDLVGNNMPVFFIRDGMKFPDMVHAFKPNPKTNLQENWRIVDFFSHHPESLHMFTFLFDDVGIPLNYRHMEGFGVNTYSLINRDGKPHLVKFHWKPTCGVKCLLDNEAVTVGGTCHSHATKDLYDSIAAGNYPEWKLYIQTIDLDHEDKFDFDPLDVTKTWPEDIIPLQPVGRMVLNKNVDNFFAENEQIAFCPAISVPAIHYSDDKLLQTRIFSYADTQRHRLGPNYLMLPVNAPKCAHHNNHHDGFMNFMHRDEEVNYFPSRFDPARHAEKVPIPPRVLTRCREKCIIQKENNFKQAGERYRSFDPARQDRFIQRWVDALTHPRVTHEHRTIWISYWSQCDAALGQKLPSRLNLKPSM</sequence>
<accession>P18122</accession>
<keyword id="KW-0349">Heme</keyword>
<keyword id="KW-0376">Hydrogen peroxide</keyword>
<keyword id="KW-0408">Iron</keyword>
<keyword id="KW-0479">Metal-binding</keyword>
<keyword id="KW-0560">Oxidoreductase</keyword>
<keyword id="KW-0575">Peroxidase</keyword>
<keyword id="KW-0576">Peroxisome</keyword>
<keyword id="KW-1185">Reference proteome</keyword>
<protein>
    <recommendedName>
        <fullName>Catalase isozyme 1</fullName>
        <ecNumber>1.11.1.6</ecNumber>
    </recommendedName>
</protein>
<gene>
    <name type="primary">CAT1</name>
</gene>
<name>CATA1_MAIZE</name>
<comment type="function">
    <text>Occurs in almost all aerobically respiring organisms and serves to protect cells from the toxic effects of hydrogen peroxide.</text>
</comment>
<comment type="catalytic activity">
    <reaction evidence="2">
        <text>2 H2O2 = O2 + 2 H2O</text>
        <dbReference type="Rhea" id="RHEA:20309"/>
        <dbReference type="ChEBI" id="CHEBI:15377"/>
        <dbReference type="ChEBI" id="CHEBI:15379"/>
        <dbReference type="ChEBI" id="CHEBI:16240"/>
        <dbReference type="EC" id="1.11.1.6"/>
    </reaction>
</comment>
<comment type="cofactor">
    <cofactor>
        <name>heme</name>
        <dbReference type="ChEBI" id="CHEBI:30413"/>
    </cofactor>
</comment>
<comment type="subunit">
    <text>Homotetramer.</text>
</comment>
<comment type="subcellular location">
    <subcellularLocation>
        <location>Peroxisome</location>
    </subcellularLocation>
</comment>
<comment type="tissue specificity">
    <text>Scutella, milky endosperm of immature kernels, leaves and epicotyls.</text>
</comment>
<comment type="similarity">
    <text evidence="3">Belongs to the catalase family.</text>
</comment>
<proteinExistence type="evidence at transcript level"/>
<dbReference type="EC" id="1.11.1.6"/>
<dbReference type="EMBL" id="X12538">
    <property type="protein sequence ID" value="CAA31056.1"/>
    <property type="molecule type" value="mRNA"/>
</dbReference>
<dbReference type="EMBL" id="X60135">
    <property type="protein sequence ID" value="CAA42720.1"/>
    <property type="molecule type" value="Genomic_DNA"/>
</dbReference>
<dbReference type="PIR" id="S48124">
    <property type="entry name" value="S48124"/>
</dbReference>
<dbReference type="RefSeq" id="NP_001105415.1">
    <property type="nucleotide sequence ID" value="NM_001111945.1"/>
</dbReference>
<dbReference type="SMR" id="P18122"/>
<dbReference type="FunCoup" id="P18122">
    <property type="interactions" value="2140"/>
</dbReference>
<dbReference type="STRING" id="4577.P18122"/>
<dbReference type="PeroxiBase" id="6437">
    <property type="entry name" value="ZmKat1"/>
</dbReference>
<dbReference type="PaxDb" id="4577-GRMZM2G088212_P01"/>
<dbReference type="MaizeGDB" id="13855"/>
<dbReference type="eggNOG" id="KOG0047">
    <property type="taxonomic scope" value="Eukaryota"/>
</dbReference>
<dbReference type="InParanoid" id="P18122"/>
<dbReference type="Proteomes" id="UP000007305">
    <property type="component" value="Unplaced"/>
</dbReference>
<dbReference type="ExpressionAtlas" id="P18122">
    <property type="expression patterns" value="baseline and differential"/>
</dbReference>
<dbReference type="GO" id="GO:0005737">
    <property type="term" value="C:cytoplasm"/>
    <property type="evidence" value="ECO:0000318"/>
    <property type="project" value="GO_Central"/>
</dbReference>
<dbReference type="GO" id="GO:0005777">
    <property type="term" value="C:peroxisome"/>
    <property type="evidence" value="ECO:0000318"/>
    <property type="project" value="GO_Central"/>
</dbReference>
<dbReference type="GO" id="GO:0005886">
    <property type="term" value="C:plasma membrane"/>
    <property type="evidence" value="ECO:0000318"/>
    <property type="project" value="GO_Central"/>
</dbReference>
<dbReference type="GO" id="GO:0004096">
    <property type="term" value="F:catalase activity"/>
    <property type="evidence" value="ECO:0000314"/>
    <property type="project" value="AgBase"/>
</dbReference>
<dbReference type="GO" id="GO:0020037">
    <property type="term" value="F:heme binding"/>
    <property type="evidence" value="ECO:0000318"/>
    <property type="project" value="GO_Central"/>
</dbReference>
<dbReference type="GO" id="GO:0046872">
    <property type="term" value="F:metal ion binding"/>
    <property type="evidence" value="ECO:0007669"/>
    <property type="project" value="UniProtKB-KW"/>
</dbReference>
<dbReference type="GO" id="GO:0009631">
    <property type="term" value="P:cold acclimation"/>
    <property type="evidence" value="ECO:0000315"/>
    <property type="project" value="AgBase"/>
</dbReference>
<dbReference type="GO" id="GO:0042744">
    <property type="term" value="P:hydrogen peroxide catabolic process"/>
    <property type="evidence" value="ECO:0000318"/>
    <property type="project" value="GO_Central"/>
</dbReference>
<dbReference type="GO" id="GO:0009737">
    <property type="term" value="P:response to abscisic acid"/>
    <property type="evidence" value="ECO:0000304"/>
    <property type="project" value="AgBase"/>
</dbReference>
<dbReference type="GO" id="GO:0009733">
    <property type="term" value="P:response to auxin"/>
    <property type="evidence" value="ECO:0000270"/>
    <property type="project" value="AgBase"/>
</dbReference>
<dbReference type="GO" id="GO:0042542">
    <property type="term" value="P:response to hydrogen peroxide"/>
    <property type="evidence" value="ECO:0000318"/>
    <property type="project" value="GO_Central"/>
</dbReference>
<dbReference type="GO" id="GO:0006979">
    <property type="term" value="P:response to oxidative stress"/>
    <property type="evidence" value="ECO:0000314"/>
    <property type="project" value="AgBase"/>
</dbReference>
<dbReference type="GO" id="GO:0000302">
    <property type="term" value="P:response to reactive oxygen species"/>
    <property type="evidence" value="ECO:0000270"/>
    <property type="project" value="AgBase"/>
</dbReference>
<dbReference type="GO" id="GO:0009410">
    <property type="term" value="P:response to xenobiotic stimulus"/>
    <property type="evidence" value="ECO:0000270"/>
    <property type="project" value="AgBase"/>
</dbReference>
<dbReference type="CDD" id="cd08154">
    <property type="entry name" value="catalase_clade_1"/>
    <property type="match status" value="1"/>
</dbReference>
<dbReference type="FunFam" id="2.40.180.10:FF:000002">
    <property type="entry name" value="Catalase"/>
    <property type="match status" value="1"/>
</dbReference>
<dbReference type="Gene3D" id="2.40.180.10">
    <property type="entry name" value="Catalase core domain"/>
    <property type="match status" value="1"/>
</dbReference>
<dbReference type="InterPro" id="IPR018028">
    <property type="entry name" value="Catalase"/>
</dbReference>
<dbReference type="InterPro" id="IPR024708">
    <property type="entry name" value="Catalase_AS"/>
</dbReference>
<dbReference type="InterPro" id="IPR024711">
    <property type="entry name" value="Catalase_clade1/3"/>
</dbReference>
<dbReference type="InterPro" id="IPR011614">
    <property type="entry name" value="Catalase_core"/>
</dbReference>
<dbReference type="InterPro" id="IPR002226">
    <property type="entry name" value="Catalase_haem_BS"/>
</dbReference>
<dbReference type="InterPro" id="IPR010582">
    <property type="entry name" value="Catalase_immune_responsive"/>
</dbReference>
<dbReference type="InterPro" id="IPR020835">
    <property type="entry name" value="Catalase_sf"/>
</dbReference>
<dbReference type="PANTHER" id="PTHR11465">
    <property type="entry name" value="CATALASE"/>
    <property type="match status" value="1"/>
</dbReference>
<dbReference type="PANTHER" id="PTHR11465:SF60">
    <property type="entry name" value="CATALASE ISOZYME B"/>
    <property type="match status" value="1"/>
</dbReference>
<dbReference type="Pfam" id="PF00199">
    <property type="entry name" value="Catalase"/>
    <property type="match status" value="1"/>
</dbReference>
<dbReference type="Pfam" id="PF06628">
    <property type="entry name" value="Catalase-rel"/>
    <property type="match status" value="1"/>
</dbReference>
<dbReference type="PIRSF" id="PIRSF038928">
    <property type="entry name" value="Catalase_clade1-3"/>
    <property type="match status" value="1"/>
</dbReference>
<dbReference type="PRINTS" id="PR00067">
    <property type="entry name" value="CATALASE"/>
</dbReference>
<dbReference type="SMART" id="SM01060">
    <property type="entry name" value="Catalase"/>
    <property type="match status" value="1"/>
</dbReference>
<dbReference type="SUPFAM" id="SSF56634">
    <property type="entry name" value="Heme-dependent catalase-like"/>
    <property type="match status" value="1"/>
</dbReference>
<dbReference type="PROSITE" id="PS00437">
    <property type="entry name" value="CATALASE_1"/>
    <property type="match status" value="1"/>
</dbReference>
<dbReference type="PROSITE" id="PS00438">
    <property type="entry name" value="CATALASE_2"/>
    <property type="match status" value="1"/>
</dbReference>
<dbReference type="PROSITE" id="PS51402">
    <property type="entry name" value="CATALASE_3"/>
    <property type="match status" value="1"/>
</dbReference>
<reference key="1">
    <citation type="journal article" date="1988" name="Biochim. Biophys. Acta">
        <title>Characterization of catalase transcripts and their differential expression in maize.</title>
        <authorList>
            <person name="Redinbaugh M.G."/>
            <person name="Wadsworth G.J."/>
            <person name="Scandalios J.G."/>
        </authorList>
    </citation>
    <scope>NUCLEOTIDE SEQUENCE [MRNA]</scope>
    <source>
        <strain>cv. R6-67</strain>
        <tissue>Scutellum</tissue>
    </source>
</reference>
<reference key="2">
    <citation type="journal article" date="1993" name="Plant J.">
        <title>Characterization of the catalase antioxidant defense gene Cat1 of maize, and its developmentally regulated expression in transgenic tobacco.</title>
        <authorList>
            <person name="Guan L."/>
            <person name="Scandalios J.G."/>
        </authorList>
    </citation>
    <scope>NUCLEOTIDE SEQUENCE [GENOMIC DNA]</scope>
    <source>
        <strain>cv. Wisconsin 64A</strain>
        <tissue>Leaf</tissue>
    </source>
</reference>